<organism>
    <name type="scientific">Homo sapiens</name>
    <name type="common">Human</name>
    <dbReference type="NCBI Taxonomy" id="9606"/>
    <lineage>
        <taxon>Eukaryota</taxon>
        <taxon>Metazoa</taxon>
        <taxon>Chordata</taxon>
        <taxon>Craniata</taxon>
        <taxon>Vertebrata</taxon>
        <taxon>Euteleostomi</taxon>
        <taxon>Mammalia</taxon>
        <taxon>Eutheria</taxon>
        <taxon>Euarchontoglires</taxon>
        <taxon>Primates</taxon>
        <taxon>Haplorrhini</taxon>
        <taxon>Catarrhini</taxon>
        <taxon>Hominidae</taxon>
        <taxon>Homo</taxon>
    </lineage>
</organism>
<name>EGR4_HUMAN</name>
<gene>
    <name type="primary">EGR4</name>
</gene>
<keyword id="KW-0238">DNA-binding</keyword>
<keyword id="KW-0479">Metal-binding</keyword>
<keyword id="KW-0539">Nucleus</keyword>
<keyword id="KW-1185">Reference proteome</keyword>
<keyword id="KW-0677">Repeat</keyword>
<keyword id="KW-0804">Transcription</keyword>
<keyword id="KW-0805">Transcription regulation</keyword>
<keyword id="KW-0862">Zinc</keyword>
<keyword id="KW-0863">Zinc-finger</keyword>
<proteinExistence type="evidence at protein level"/>
<sequence length="589" mass="61623">MAVARGVGSPEPAPPQLYKWGGCGLGEPGSALERRGAAARGRCGRARAPRLPDSFPRGECPKPGARAPRSVRCGEPLPPASPPPARPQAQRARPRAPHSRRRAMLHLSEFSEPDALLVKSTEGCCAEPSAELPRLPARDAPAATGYPGAGDFLSWALNSCGASGDLADSCFLEGPAPTPPPGLSYSGSFFIQAVPEHPHDPEALFNLMSGILGLAPFPGPEAAASRSPLDAPFPAGSDALLPGPPDLYSPDLGAAPFPEAFWEASPCAGAPSQCLYEPQLSPPDVKPGLRAPPASPALDAVSAFKGPYAPWELLSVGAPGNCGSQGDYQAAPEARFPVIGTKIEDLLSISCPAELPAVPANRLYPSGAYDAFPLAPGDLGEGAEGLPGLLTPPSGEGGSSGDGGEFLASTQPQLSPLGLRSAAAADFPKPLVADIPGSSGVAAPPVPPPPPTPFPQAKARRKGRRGGKCSTRCFCPRPHAKAFACPVESCVRSFARSDELNRHLRIHTGHKPFQCRICLRNFSRSDHLTTHVRTHTGEKPFACDVCGRRFARSDEKKRHSKVHLKQKARAEERLKGLGFYSLGLSFASL</sequence>
<dbReference type="EMBL" id="X69438">
    <property type="protein sequence ID" value="CAA49214.1"/>
    <property type="status" value="ALT_FRAME"/>
    <property type="molecule type" value="Genomic_DNA"/>
</dbReference>
<dbReference type="EMBL" id="AK314154">
    <property type="protein sequence ID" value="BAG36840.1"/>
    <property type="status" value="ALT_INIT"/>
    <property type="molecule type" value="mRNA"/>
</dbReference>
<dbReference type="EMBL" id="AC010913">
    <property type="protein sequence ID" value="AAX88903.1"/>
    <property type="status" value="ALT_INIT"/>
    <property type="molecule type" value="Genomic_DNA"/>
</dbReference>
<dbReference type="EMBL" id="CH471053">
    <property type="protein sequence ID" value="EAW99734.1"/>
    <property type="molecule type" value="Genomic_DNA"/>
</dbReference>
<dbReference type="EMBL" id="X60104">
    <property type="protein sequence ID" value="CAA42698.1"/>
    <property type="status" value="ALT_FRAME"/>
    <property type="molecule type" value="mRNA"/>
</dbReference>
<dbReference type="PIR" id="A41537">
    <property type="entry name" value="A41537"/>
</dbReference>
<dbReference type="RefSeq" id="NP_001956.3">
    <property type="nucleotide sequence ID" value="NM_001965.3"/>
</dbReference>
<dbReference type="SMR" id="Q05215"/>
<dbReference type="BioGRID" id="108281">
    <property type="interactions" value="4"/>
</dbReference>
<dbReference type="FunCoup" id="Q05215">
    <property type="interactions" value="828"/>
</dbReference>
<dbReference type="IntAct" id="Q05215">
    <property type="interactions" value="2"/>
</dbReference>
<dbReference type="STRING" id="9606.ENSP00000445626"/>
<dbReference type="GlyGen" id="Q05215">
    <property type="glycosylation" value="3 sites, 1 N-linked glycan (1 site)"/>
</dbReference>
<dbReference type="iPTMnet" id="Q05215"/>
<dbReference type="PhosphoSitePlus" id="Q05215"/>
<dbReference type="BioMuta" id="EGR4"/>
<dbReference type="DMDM" id="485956294"/>
<dbReference type="MassIVE" id="Q05215"/>
<dbReference type="PaxDb" id="9606-ENSP00000445626"/>
<dbReference type="PeptideAtlas" id="Q05215"/>
<dbReference type="Antibodypedia" id="16536">
    <property type="antibodies" value="112 antibodies from 26 providers"/>
</dbReference>
<dbReference type="DNASU" id="1961"/>
<dbReference type="Ensembl" id="ENST00000545030.1">
    <property type="protein sequence ID" value="ENSP00000445626.1"/>
    <property type="gene ID" value="ENSG00000135625.8"/>
</dbReference>
<dbReference type="GeneID" id="1961"/>
<dbReference type="KEGG" id="hsa:1961"/>
<dbReference type="UCSC" id="uc010yrj.3">
    <property type="organism name" value="human"/>
</dbReference>
<dbReference type="AGR" id="HGNC:3241"/>
<dbReference type="CTD" id="1961"/>
<dbReference type="DisGeNET" id="1961"/>
<dbReference type="GeneCards" id="EGR4"/>
<dbReference type="HGNC" id="HGNC:3241">
    <property type="gene designation" value="EGR4"/>
</dbReference>
<dbReference type="HPA" id="ENSG00000135625">
    <property type="expression patterns" value="Tissue enriched (brain)"/>
</dbReference>
<dbReference type="MIM" id="128992">
    <property type="type" value="gene"/>
</dbReference>
<dbReference type="neXtProt" id="NX_Q05215"/>
<dbReference type="OpenTargets" id="ENSG00000135625"/>
<dbReference type="PharmGKB" id="PA27676"/>
<dbReference type="VEuPathDB" id="HostDB:ENSG00000135625"/>
<dbReference type="eggNOG" id="KOG1721">
    <property type="taxonomic scope" value="Eukaryota"/>
</dbReference>
<dbReference type="GeneTree" id="ENSGT00940000162199"/>
<dbReference type="InParanoid" id="Q05215"/>
<dbReference type="OMA" id="LYKWGGC"/>
<dbReference type="OrthoDB" id="8197458at2759"/>
<dbReference type="PAN-GO" id="Q05215">
    <property type="GO annotations" value="3 GO annotations based on evolutionary models"/>
</dbReference>
<dbReference type="PhylomeDB" id="Q05215"/>
<dbReference type="TreeFam" id="TF318980"/>
<dbReference type="PathwayCommons" id="Q05215"/>
<dbReference type="Reactome" id="R-HSA-9031628">
    <property type="pathway name" value="NGF-stimulated transcription"/>
</dbReference>
<dbReference type="SignaLink" id="Q05215"/>
<dbReference type="BioGRID-ORCS" id="1961">
    <property type="hits" value="22 hits in 1161 CRISPR screens"/>
</dbReference>
<dbReference type="GeneWiki" id="EGR4"/>
<dbReference type="GenomeRNAi" id="1961"/>
<dbReference type="Pharos" id="Q05215">
    <property type="development level" value="Tbio"/>
</dbReference>
<dbReference type="PRO" id="PR:Q05215"/>
<dbReference type="Proteomes" id="UP000005640">
    <property type="component" value="Chromosome 2"/>
</dbReference>
<dbReference type="RNAct" id="Q05215">
    <property type="molecule type" value="protein"/>
</dbReference>
<dbReference type="Bgee" id="ENSG00000135625">
    <property type="expression patterns" value="Expressed in type B pancreatic cell and 89 other cell types or tissues"/>
</dbReference>
<dbReference type="ExpressionAtlas" id="Q05215">
    <property type="expression patterns" value="baseline and differential"/>
</dbReference>
<dbReference type="GO" id="GO:0000785">
    <property type="term" value="C:chromatin"/>
    <property type="evidence" value="ECO:0000247"/>
    <property type="project" value="NTNU_SB"/>
</dbReference>
<dbReference type="GO" id="GO:0005654">
    <property type="term" value="C:nucleoplasm"/>
    <property type="evidence" value="ECO:0000304"/>
    <property type="project" value="Reactome"/>
</dbReference>
<dbReference type="GO" id="GO:0001228">
    <property type="term" value="F:DNA-binding transcription activator activity, RNA polymerase II-specific"/>
    <property type="evidence" value="ECO:0000314"/>
    <property type="project" value="NTNU_SB"/>
</dbReference>
<dbReference type="GO" id="GO:0003700">
    <property type="term" value="F:DNA-binding transcription factor activity"/>
    <property type="evidence" value="ECO:0000303"/>
    <property type="project" value="ProtInc"/>
</dbReference>
<dbReference type="GO" id="GO:0000981">
    <property type="term" value="F:DNA-binding transcription factor activity, RNA polymerase II-specific"/>
    <property type="evidence" value="ECO:0000247"/>
    <property type="project" value="NTNU_SB"/>
</dbReference>
<dbReference type="GO" id="GO:0000978">
    <property type="term" value="F:RNA polymerase II cis-regulatory region sequence-specific DNA binding"/>
    <property type="evidence" value="ECO:0000318"/>
    <property type="project" value="GO_Central"/>
</dbReference>
<dbReference type="GO" id="GO:0043565">
    <property type="term" value="F:sequence-specific DNA binding"/>
    <property type="evidence" value="ECO:0000314"/>
    <property type="project" value="NTNU_SB"/>
</dbReference>
<dbReference type="GO" id="GO:1990837">
    <property type="term" value="F:sequence-specific double-stranded DNA binding"/>
    <property type="evidence" value="ECO:0000314"/>
    <property type="project" value="ARUK-UCL"/>
</dbReference>
<dbReference type="GO" id="GO:0008270">
    <property type="term" value="F:zinc ion binding"/>
    <property type="evidence" value="ECO:0007669"/>
    <property type="project" value="UniProtKB-KW"/>
</dbReference>
<dbReference type="GO" id="GO:0008284">
    <property type="term" value="P:positive regulation of cell population proliferation"/>
    <property type="evidence" value="ECO:0000304"/>
    <property type="project" value="ProtInc"/>
</dbReference>
<dbReference type="GO" id="GO:0045944">
    <property type="term" value="P:positive regulation of transcription by RNA polymerase II"/>
    <property type="evidence" value="ECO:0000314"/>
    <property type="project" value="NTNU_SB"/>
</dbReference>
<dbReference type="GO" id="GO:0006357">
    <property type="term" value="P:regulation of transcription by RNA polymerase II"/>
    <property type="evidence" value="ECO:0000318"/>
    <property type="project" value="GO_Central"/>
</dbReference>
<dbReference type="FunFam" id="3.30.160.60:FF:000064">
    <property type="entry name" value="Early growth response protein 3"/>
    <property type="match status" value="1"/>
</dbReference>
<dbReference type="Gene3D" id="3.30.160.60">
    <property type="entry name" value="Classic Zinc Finger"/>
    <property type="match status" value="3"/>
</dbReference>
<dbReference type="InterPro" id="IPR036236">
    <property type="entry name" value="Znf_C2H2_sf"/>
</dbReference>
<dbReference type="InterPro" id="IPR013087">
    <property type="entry name" value="Znf_C2H2_type"/>
</dbReference>
<dbReference type="PANTHER" id="PTHR23235:SF58">
    <property type="entry name" value="EARLY GROWTH RESPONSE PROTEIN 4"/>
    <property type="match status" value="1"/>
</dbReference>
<dbReference type="PANTHER" id="PTHR23235">
    <property type="entry name" value="KRUEPPEL-LIKE TRANSCRIPTION FACTOR"/>
    <property type="match status" value="1"/>
</dbReference>
<dbReference type="Pfam" id="PF00096">
    <property type="entry name" value="zf-C2H2"/>
    <property type="match status" value="3"/>
</dbReference>
<dbReference type="SMART" id="SM00355">
    <property type="entry name" value="ZnF_C2H2"/>
    <property type="match status" value="3"/>
</dbReference>
<dbReference type="SUPFAM" id="SSF57667">
    <property type="entry name" value="beta-beta-alpha zinc fingers"/>
    <property type="match status" value="2"/>
</dbReference>
<dbReference type="PROSITE" id="PS00028">
    <property type="entry name" value="ZINC_FINGER_C2H2_1"/>
    <property type="match status" value="3"/>
</dbReference>
<dbReference type="PROSITE" id="PS50157">
    <property type="entry name" value="ZINC_FINGER_C2H2_2"/>
    <property type="match status" value="3"/>
</dbReference>
<reference key="1">
    <citation type="journal article" date="1993" name="Hum. Mol. Genet.">
        <title>Genomic organization, chromosomal localization and promoter function of the human zinc-finger gene pAT133.</title>
        <authorList>
            <person name="Holst C."/>
            <person name="Skerka C."/>
            <person name="Lichter P."/>
            <person name="Bialonski A."/>
            <person name="Zipfel P.F."/>
        </authorList>
    </citation>
    <scope>NUCLEOTIDE SEQUENCE [GENOMIC DNA]</scope>
</reference>
<reference key="2">
    <citation type="journal article" date="2004" name="Nat. Genet.">
        <title>Complete sequencing and characterization of 21,243 full-length human cDNAs.</title>
        <authorList>
            <person name="Ota T."/>
            <person name="Suzuki Y."/>
            <person name="Nishikawa T."/>
            <person name="Otsuki T."/>
            <person name="Sugiyama T."/>
            <person name="Irie R."/>
            <person name="Wakamatsu A."/>
            <person name="Hayashi K."/>
            <person name="Sato H."/>
            <person name="Nagai K."/>
            <person name="Kimura K."/>
            <person name="Makita H."/>
            <person name="Sekine M."/>
            <person name="Obayashi M."/>
            <person name="Nishi T."/>
            <person name="Shibahara T."/>
            <person name="Tanaka T."/>
            <person name="Ishii S."/>
            <person name="Yamamoto J."/>
            <person name="Saito K."/>
            <person name="Kawai Y."/>
            <person name="Isono Y."/>
            <person name="Nakamura Y."/>
            <person name="Nagahari K."/>
            <person name="Murakami K."/>
            <person name="Yasuda T."/>
            <person name="Iwayanagi T."/>
            <person name="Wagatsuma M."/>
            <person name="Shiratori A."/>
            <person name="Sudo H."/>
            <person name="Hosoiri T."/>
            <person name="Kaku Y."/>
            <person name="Kodaira H."/>
            <person name="Kondo H."/>
            <person name="Sugawara M."/>
            <person name="Takahashi M."/>
            <person name="Kanda K."/>
            <person name="Yokoi T."/>
            <person name="Furuya T."/>
            <person name="Kikkawa E."/>
            <person name="Omura Y."/>
            <person name="Abe K."/>
            <person name="Kamihara K."/>
            <person name="Katsuta N."/>
            <person name="Sato K."/>
            <person name="Tanikawa M."/>
            <person name="Yamazaki M."/>
            <person name="Ninomiya K."/>
            <person name="Ishibashi T."/>
            <person name="Yamashita H."/>
            <person name="Murakawa K."/>
            <person name="Fujimori K."/>
            <person name="Tanai H."/>
            <person name="Kimata M."/>
            <person name="Watanabe M."/>
            <person name="Hiraoka S."/>
            <person name="Chiba Y."/>
            <person name="Ishida S."/>
            <person name="Ono Y."/>
            <person name="Takiguchi S."/>
            <person name="Watanabe S."/>
            <person name="Yosida M."/>
            <person name="Hotuta T."/>
            <person name="Kusano J."/>
            <person name="Kanehori K."/>
            <person name="Takahashi-Fujii A."/>
            <person name="Hara H."/>
            <person name="Tanase T.-O."/>
            <person name="Nomura Y."/>
            <person name="Togiya S."/>
            <person name="Komai F."/>
            <person name="Hara R."/>
            <person name="Takeuchi K."/>
            <person name="Arita M."/>
            <person name="Imose N."/>
            <person name="Musashino K."/>
            <person name="Yuuki H."/>
            <person name="Oshima A."/>
            <person name="Sasaki N."/>
            <person name="Aotsuka S."/>
            <person name="Yoshikawa Y."/>
            <person name="Matsunawa H."/>
            <person name="Ichihara T."/>
            <person name="Shiohata N."/>
            <person name="Sano S."/>
            <person name="Moriya S."/>
            <person name="Momiyama H."/>
            <person name="Satoh N."/>
            <person name="Takami S."/>
            <person name="Terashima Y."/>
            <person name="Suzuki O."/>
            <person name="Nakagawa S."/>
            <person name="Senoh A."/>
            <person name="Mizoguchi H."/>
            <person name="Goto Y."/>
            <person name="Shimizu F."/>
            <person name="Wakebe H."/>
            <person name="Hishigaki H."/>
            <person name="Watanabe T."/>
            <person name="Sugiyama A."/>
            <person name="Takemoto M."/>
            <person name="Kawakami B."/>
            <person name="Yamazaki M."/>
            <person name="Watanabe K."/>
            <person name="Kumagai A."/>
            <person name="Itakura S."/>
            <person name="Fukuzumi Y."/>
            <person name="Fujimori Y."/>
            <person name="Komiyama M."/>
            <person name="Tashiro H."/>
            <person name="Tanigami A."/>
            <person name="Fujiwara T."/>
            <person name="Ono T."/>
            <person name="Yamada K."/>
            <person name="Fujii Y."/>
            <person name="Ozaki K."/>
            <person name="Hirao M."/>
            <person name="Ohmori Y."/>
            <person name="Kawabata A."/>
            <person name="Hikiji T."/>
            <person name="Kobatake N."/>
            <person name="Inagaki H."/>
            <person name="Ikema Y."/>
            <person name="Okamoto S."/>
            <person name="Okitani R."/>
            <person name="Kawakami T."/>
            <person name="Noguchi S."/>
            <person name="Itoh T."/>
            <person name="Shigeta K."/>
            <person name="Senba T."/>
            <person name="Matsumura K."/>
            <person name="Nakajima Y."/>
            <person name="Mizuno T."/>
            <person name="Morinaga M."/>
            <person name="Sasaki M."/>
            <person name="Togashi T."/>
            <person name="Oyama M."/>
            <person name="Hata H."/>
            <person name="Watanabe M."/>
            <person name="Komatsu T."/>
            <person name="Mizushima-Sugano J."/>
            <person name="Satoh T."/>
            <person name="Shirai Y."/>
            <person name="Takahashi Y."/>
            <person name="Nakagawa K."/>
            <person name="Okumura K."/>
            <person name="Nagase T."/>
            <person name="Nomura N."/>
            <person name="Kikuchi H."/>
            <person name="Masuho Y."/>
            <person name="Yamashita R."/>
            <person name="Nakai K."/>
            <person name="Yada T."/>
            <person name="Nakamura Y."/>
            <person name="Ohara O."/>
            <person name="Isogai T."/>
            <person name="Sugano S."/>
        </authorList>
    </citation>
    <scope>NUCLEOTIDE SEQUENCE [LARGE SCALE MRNA]</scope>
</reference>
<reference key="3">
    <citation type="journal article" date="2005" name="Nature">
        <title>Generation and annotation of the DNA sequences of human chromosomes 2 and 4.</title>
        <authorList>
            <person name="Hillier L.W."/>
            <person name="Graves T.A."/>
            <person name="Fulton R.S."/>
            <person name="Fulton L.A."/>
            <person name="Pepin K.H."/>
            <person name="Minx P."/>
            <person name="Wagner-McPherson C."/>
            <person name="Layman D."/>
            <person name="Wylie K."/>
            <person name="Sekhon M."/>
            <person name="Becker M.C."/>
            <person name="Fewell G.A."/>
            <person name="Delehaunty K.D."/>
            <person name="Miner T.L."/>
            <person name="Nash W.E."/>
            <person name="Kremitzki C."/>
            <person name="Oddy L."/>
            <person name="Du H."/>
            <person name="Sun H."/>
            <person name="Bradshaw-Cordum H."/>
            <person name="Ali J."/>
            <person name="Carter J."/>
            <person name="Cordes M."/>
            <person name="Harris A."/>
            <person name="Isak A."/>
            <person name="van Brunt A."/>
            <person name="Nguyen C."/>
            <person name="Du F."/>
            <person name="Courtney L."/>
            <person name="Kalicki J."/>
            <person name="Ozersky P."/>
            <person name="Abbott S."/>
            <person name="Armstrong J."/>
            <person name="Belter E.A."/>
            <person name="Caruso L."/>
            <person name="Cedroni M."/>
            <person name="Cotton M."/>
            <person name="Davidson T."/>
            <person name="Desai A."/>
            <person name="Elliott G."/>
            <person name="Erb T."/>
            <person name="Fronick C."/>
            <person name="Gaige T."/>
            <person name="Haakenson W."/>
            <person name="Haglund K."/>
            <person name="Holmes A."/>
            <person name="Harkins R."/>
            <person name="Kim K."/>
            <person name="Kruchowski S.S."/>
            <person name="Strong C.M."/>
            <person name="Grewal N."/>
            <person name="Goyea E."/>
            <person name="Hou S."/>
            <person name="Levy A."/>
            <person name="Martinka S."/>
            <person name="Mead K."/>
            <person name="McLellan M.D."/>
            <person name="Meyer R."/>
            <person name="Randall-Maher J."/>
            <person name="Tomlinson C."/>
            <person name="Dauphin-Kohlberg S."/>
            <person name="Kozlowicz-Reilly A."/>
            <person name="Shah N."/>
            <person name="Swearengen-Shahid S."/>
            <person name="Snider J."/>
            <person name="Strong J.T."/>
            <person name="Thompson J."/>
            <person name="Yoakum M."/>
            <person name="Leonard S."/>
            <person name="Pearman C."/>
            <person name="Trani L."/>
            <person name="Radionenko M."/>
            <person name="Waligorski J.E."/>
            <person name="Wang C."/>
            <person name="Rock S.M."/>
            <person name="Tin-Wollam A.-M."/>
            <person name="Maupin R."/>
            <person name="Latreille P."/>
            <person name="Wendl M.C."/>
            <person name="Yang S.-P."/>
            <person name="Pohl C."/>
            <person name="Wallis J.W."/>
            <person name="Spieth J."/>
            <person name="Bieri T.A."/>
            <person name="Berkowicz N."/>
            <person name="Nelson J.O."/>
            <person name="Osborne J."/>
            <person name="Ding L."/>
            <person name="Meyer R."/>
            <person name="Sabo A."/>
            <person name="Shotland Y."/>
            <person name="Sinha P."/>
            <person name="Wohldmann P.E."/>
            <person name="Cook L.L."/>
            <person name="Hickenbotham M.T."/>
            <person name="Eldred J."/>
            <person name="Williams D."/>
            <person name="Jones T.A."/>
            <person name="She X."/>
            <person name="Ciccarelli F.D."/>
            <person name="Izaurralde E."/>
            <person name="Taylor J."/>
            <person name="Schmutz J."/>
            <person name="Myers R.M."/>
            <person name="Cox D.R."/>
            <person name="Huang X."/>
            <person name="McPherson J.D."/>
            <person name="Mardis E.R."/>
            <person name="Clifton S.W."/>
            <person name="Warren W.C."/>
            <person name="Chinwalla A.T."/>
            <person name="Eddy S.R."/>
            <person name="Marra M.A."/>
            <person name="Ovcharenko I."/>
            <person name="Furey T.S."/>
            <person name="Miller W."/>
            <person name="Eichler E.E."/>
            <person name="Bork P."/>
            <person name="Suyama M."/>
            <person name="Torrents D."/>
            <person name="Waterston R.H."/>
            <person name="Wilson R.K."/>
        </authorList>
    </citation>
    <scope>NUCLEOTIDE SEQUENCE [LARGE SCALE GENOMIC DNA]</scope>
</reference>
<reference key="4">
    <citation type="submission" date="2005-09" db="EMBL/GenBank/DDBJ databases">
        <authorList>
            <person name="Mural R.J."/>
            <person name="Istrail S."/>
            <person name="Sutton G.G."/>
            <person name="Florea L."/>
            <person name="Halpern A.L."/>
            <person name="Mobarry C.M."/>
            <person name="Lippert R."/>
            <person name="Walenz B."/>
            <person name="Shatkay H."/>
            <person name="Dew I."/>
            <person name="Miller J.R."/>
            <person name="Flanigan M.J."/>
            <person name="Edwards N.J."/>
            <person name="Bolanos R."/>
            <person name="Fasulo D."/>
            <person name="Halldorsson B.V."/>
            <person name="Hannenhalli S."/>
            <person name="Turner R."/>
            <person name="Yooseph S."/>
            <person name="Lu F."/>
            <person name="Nusskern D.R."/>
            <person name="Shue B.C."/>
            <person name="Zheng X.H."/>
            <person name="Zhong F."/>
            <person name="Delcher A.L."/>
            <person name="Huson D.H."/>
            <person name="Kravitz S.A."/>
            <person name="Mouchard L."/>
            <person name="Reinert K."/>
            <person name="Remington K.A."/>
            <person name="Clark A.G."/>
            <person name="Waterman M.S."/>
            <person name="Eichler E.E."/>
            <person name="Adams M.D."/>
            <person name="Hunkapiller M.W."/>
            <person name="Myers E.W."/>
            <person name="Venter J.C."/>
        </authorList>
    </citation>
    <scope>NUCLEOTIDE SEQUENCE [LARGE SCALE GENOMIC DNA]</scope>
</reference>
<reference key="5">
    <citation type="journal article" date="1991" name="Proc. Natl. Acad. Sci. U.S.A.">
        <title>Clone pAT133 identifies a gene that encodes another human member of a class of growth factor-induced genes with almost identical zinc-finger domains.</title>
        <authorList>
            <person name="Mueller H.-J."/>
            <person name="Skerka C."/>
            <person name="Bialonski A."/>
            <person name="Zipfel P.F."/>
        </authorList>
    </citation>
    <scope>NUCLEOTIDE SEQUENCE [MRNA] OF 49-589</scope>
</reference>
<accession>Q05215</accession>
<accession>B2RAE3</accession>
<accession>G3V1T5</accession>
<accession>Q2Z1P5</accession>
<evidence type="ECO:0000250" key="1"/>
<evidence type="ECO:0000255" key="2">
    <source>
        <dbReference type="PROSITE-ProRule" id="PRU00042"/>
    </source>
</evidence>
<evidence type="ECO:0000256" key="3">
    <source>
        <dbReference type="SAM" id="MobiDB-lite"/>
    </source>
</evidence>
<evidence type="ECO:0000305" key="4"/>
<comment type="function">
    <text evidence="1">Transcriptional regulator. Recognizes and binds to the DNA sequence 5'-GCGGGGGCG-3' (GSG). Activates the transcription of target genes whose products are required for mitogenesis and differentiation (By similarity).</text>
</comment>
<comment type="interaction">
    <interactant intactId="EBI-19949420">
        <id>Q05215</id>
    </interactant>
    <interactant intactId="EBI-11096309">
        <id>Q9NYB9-2</id>
        <label>ABI2</label>
    </interactant>
    <organismsDiffer>false</organismsDiffer>
    <experiments>3</experiments>
</comment>
<comment type="interaction">
    <interactant intactId="EBI-19949420">
        <id>Q05215</id>
    </interactant>
    <interactant intactId="EBI-747185">
        <id>O95817</id>
        <label>BAG3</label>
    </interactant>
    <organismsDiffer>false</organismsDiffer>
    <experiments>3</experiments>
</comment>
<comment type="subcellular location">
    <subcellularLocation>
        <location evidence="4">Nucleus</location>
    </subcellularLocation>
</comment>
<comment type="induction">
    <text>By PHA/PMA or by serum.</text>
</comment>
<comment type="similarity">
    <text evidence="4">Belongs to the EGR C2H2-type zinc-finger protein family.</text>
</comment>
<comment type="caution">
    <text evidence="4">It is uncertain whether Met-1 or Met-104 is the initiator. Some orthologous sequences cannot be extended.</text>
</comment>
<comment type="sequence caution" evidence="4">
    <conflict type="erroneous initiation">
        <sequence resource="EMBL-CDS" id="AAX88903"/>
    </conflict>
    <text>Truncated N-terminus.</text>
</comment>
<comment type="sequence caution" evidence="4">
    <conflict type="erroneous initiation">
        <sequence resource="EMBL-CDS" id="BAG36840"/>
    </conflict>
    <text>Truncated N-terminus.</text>
</comment>
<comment type="sequence caution" evidence="4">
    <conflict type="frameshift">
        <sequence resource="EMBL-CDS" id="CAA42698"/>
    </conflict>
</comment>
<comment type="sequence caution" evidence="4">
    <conflict type="frameshift">
        <sequence resource="EMBL-CDS" id="CAA49214"/>
    </conflict>
</comment>
<feature type="chain" id="PRO_0000047128" description="Early growth response protein 4">
    <location>
        <begin position="1"/>
        <end position="589"/>
    </location>
</feature>
<feature type="zinc finger region" description="C2H2-type 1" evidence="2">
    <location>
        <begin position="483"/>
        <end position="507"/>
    </location>
</feature>
<feature type="zinc finger region" description="C2H2-type 2" evidence="2">
    <location>
        <begin position="513"/>
        <end position="535"/>
    </location>
</feature>
<feature type="zinc finger region" description="C2H2-type 3" evidence="2">
    <location>
        <begin position="541"/>
        <end position="563"/>
    </location>
</feature>
<feature type="region of interest" description="Disordered" evidence="3">
    <location>
        <begin position="29"/>
        <end position="101"/>
    </location>
</feature>
<feature type="region of interest" description="Disordered" evidence="3">
    <location>
        <begin position="383"/>
        <end position="411"/>
    </location>
</feature>
<feature type="region of interest" description="Disordered" evidence="3">
    <location>
        <begin position="436"/>
        <end position="466"/>
    </location>
</feature>
<feature type="compositionally biased region" description="Pro residues" evidence="3">
    <location>
        <begin position="76"/>
        <end position="86"/>
    </location>
</feature>
<feature type="compositionally biased region" description="Basic residues" evidence="3">
    <location>
        <begin position="92"/>
        <end position="101"/>
    </location>
</feature>
<feature type="compositionally biased region" description="Gly residues" evidence="3">
    <location>
        <begin position="395"/>
        <end position="404"/>
    </location>
</feature>
<feature type="compositionally biased region" description="Pro residues" evidence="3">
    <location>
        <begin position="444"/>
        <end position="454"/>
    </location>
</feature>
<feature type="sequence conflict" description="In Ref. 5; CAA42698 and 1; CAA49214." evidence="4" ref="5 1">
    <original>I</original>
    <variation>V</variation>
    <location>
        <position position="211"/>
    </location>
</feature>
<feature type="sequence conflict" description="In Ref. 5; CAA42698 and 1; CAA49214." evidence="4" ref="5 1">
    <original>A</original>
    <variation>R</variation>
    <location>
        <position position="291"/>
    </location>
</feature>
<feature type="sequence conflict" description="In Ref. 2; BAG36840." evidence="4" ref="2">
    <original>V</original>
    <variation>M</variation>
    <location>
        <position position="446"/>
    </location>
</feature>
<feature type="sequence conflict" description="In Ref. 1; CAA49214." evidence="4" ref="1">
    <original>T</original>
    <variation>S</variation>
    <location>
        <position position="530"/>
    </location>
</feature>
<protein>
    <recommendedName>
        <fullName>Early growth response protein 4</fullName>
        <shortName>EGR-4</shortName>
    </recommendedName>
    <alternativeName>
        <fullName>AT133</fullName>
    </alternativeName>
</protein>